<organism>
    <name type="scientific">Prochlorococcus marinus (strain MIT 9313)</name>
    <dbReference type="NCBI Taxonomy" id="74547"/>
    <lineage>
        <taxon>Bacteria</taxon>
        <taxon>Bacillati</taxon>
        <taxon>Cyanobacteriota</taxon>
        <taxon>Cyanophyceae</taxon>
        <taxon>Synechococcales</taxon>
        <taxon>Prochlorococcaceae</taxon>
        <taxon>Prochlorococcus</taxon>
    </lineage>
</organism>
<accession>Q7TUN4</accession>
<dbReference type="EC" id="6.3.5.-" evidence="1"/>
<dbReference type="EMBL" id="BX548175">
    <property type="protein sequence ID" value="CAE21990.1"/>
    <property type="molecule type" value="Genomic_DNA"/>
</dbReference>
<dbReference type="RefSeq" id="WP_011131182.1">
    <property type="nucleotide sequence ID" value="NC_005071.1"/>
</dbReference>
<dbReference type="SMR" id="Q7TUN4"/>
<dbReference type="KEGG" id="pmt:PMT_1815"/>
<dbReference type="eggNOG" id="COG0721">
    <property type="taxonomic scope" value="Bacteria"/>
</dbReference>
<dbReference type="HOGENOM" id="CLU_105899_1_2_3"/>
<dbReference type="OrthoDB" id="9813938at2"/>
<dbReference type="Proteomes" id="UP000001423">
    <property type="component" value="Chromosome"/>
</dbReference>
<dbReference type="GO" id="GO:0050566">
    <property type="term" value="F:asparaginyl-tRNA synthase (glutamine-hydrolyzing) activity"/>
    <property type="evidence" value="ECO:0007669"/>
    <property type="project" value="RHEA"/>
</dbReference>
<dbReference type="GO" id="GO:0005524">
    <property type="term" value="F:ATP binding"/>
    <property type="evidence" value="ECO:0007669"/>
    <property type="project" value="UniProtKB-KW"/>
</dbReference>
<dbReference type="GO" id="GO:0050567">
    <property type="term" value="F:glutaminyl-tRNA synthase (glutamine-hydrolyzing) activity"/>
    <property type="evidence" value="ECO:0007669"/>
    <property type="project" value="UniProtKB-UniRule"/>
</dbReference>
<dbReference type="GO" id="GO:0070681">
    <property type="term" value="P:glutaminyl-tRNAGln biosynthesis via transamidation"/>
    <property type="evidence" value="ECO:0007669"/>
    <property type="project" value="TreeGrafter"/>
</dbReference>
<dbReference type="GO" id="GO:0006450">
    <property type="term" value="P:regulation of translational fidelity"/>
    <property type="evidence" value="ECO:0007669"/>
    <property type="project" value="InterPro"/>
</dbReference>
<dbReference type="GO" id="GO:0006412">
    <property type="term" value="P:translation"/>
    <property type="evidence" value="ECO:0007669"/>
    <property type="project" value="UniProtKB-UniRule"/>
</dbReference>
<dbReference type="Gene3D" id="1.10.20.60">
    <property type="entry name" value="Glu-tRNAGln amidotransferase C subunit, N-terminal domain"/>
    <property type="match status" value="1"/>
</dbReference>
<dbReference type="HAMAP" id="MF_00122">
    <property type="entry name" value="GatC"/>
    <property type="match status" value="1"/>
</dbReference>
<dbReference type="InterPro" id="IPR036113">
    <property type="entry name" value="Asp/Glu-ADT_sf_sub_c"/>
</dbReference>
<dbReference type="InterPro" id="IPR003837">
    <property type="entry name" value="GatC"/>
</dbReference>
<dbReference type="NCBIfam" id="TIGR00135">
    <property type="entry name" value="gatC"/>
    <property type="match status" value="1"/>
</dbReference>
<dbReference type="PANTHER" id="PTHR15004">
    <property type="entry name" value="GLUTAMYL-TRNA(GLN) AMIDOTRANSFERASE SUBUNIT C, MITOCHONDRIAL"/>
    <property type="match status" value="1"/>
</dbReference>
<dbReference type="PANTHER" id="PTHR15004:SF0">
    <property type="entry name" value="GLUTAMYL-TRNA(GLN) AMIDOTRANSFERASE SUBUNIT C, MITOCHONDRIAL"/>
    <property type="match status" value="1"/>
</dbReference>
<dbReference type="Pfam" id="PF02686">
    <property type="entry name" value="GatC"/>
    <property type="match status" value="1"/>
</dbReference>
<dbReference type="SUPFAM" id="SSF141000">
    <property type="entry name" value="Glu-tRNAGln amidotransferase C subunit"/>
    <property type="match status" value="1"/>
</dbReference>
<sequence>MSKITAKDVRKVAQLARLDLPDDQIATYTEQLERILAYVAQLEEIDTTNVKPTTRAVEVVNVTRTDEVSETPVREELLNLAPQREGDFFRVPKILAE</sequence>
<reference key="1">
    <citation type="journal article" date="2003" name="Nature">
        <title>Genome divergence in two Prochlorococcus ecotypes reflects oceanic niche differentiation.</title>
        <authorList>
            <person name="Rocap G."/>
            <person name="Larimer F.W."/>
            <person name="Lamerdin J.E."/>
            <person name="Malfatti S."/>
            <person name="Chain P."/>
            <person name="Ahlgren N.A."/>
            <person name="Arellano A."/>
            <person name="Coleman M."/>
            <person name="Hauser L."/>
            <person name="Hess W.R."/>
            <person name="Johnson Z.I."/>
            <person name="Land M.L."/>
            <person name="Lindell D."/>
            <person name="Post A.F."/>
            <person name="Regala W."/>
            <person name="Shah M."/>
            <person name="Shaw S.L."/>
            <person name="Steglich C."/>
            <person name="Sullivan M.B."/>
            <person name="Ting C.S."/>
            <person name="Tolonen A."/>
            <person name="Webb E.A."/>
            <person name="Zinser E.R."/>
            <person name="Chisholm S.W."/>
        </authorList>
    </citation>
    <scope>NUCLEOTIDE SEQUENCE [LARGE SCALE GENOMIC DNA]</scope>
    <source>
        <strain>MIT 9313</strain>
    </source>
</reference>
<keyword id="KW-0067">ATP-binding</keyword>
<keyword id="KW-0436">Ligase</keyword>
<keyword id="KW-0547">Nucleotide-binding</keyword>
<keyword id="KW-0648">Protein biosynthesis</keyword>
<keyword id="KW-1185">Reference proteome</keyword>
<comment type="function">
    <text evidence="1">Allows the formation of correctly charged Asn-tRNA(Asn) or Gln-tRNA(Gln) through the transamidation of misacylated Asp-tRNA(Asn) or Glu-tRNA(Gln) in organisms which lack either or both of asparaginyl-tRNA or glutaminyl-tRNA synthetases. The reaction takes place in the presence of glutamine and ATP through an activated phospho-Asp-tRNA(Asn) or phospho-Glu-tRNA(Gln).</text>
</comment>
<comment type="catalytic activity">
    <reaction evidence="1">
        <text>L-glutamyl-tRNA(Gln) + L-glutamine + ATP + H2O = L-glutaminyl-tRNA(Gln) + L-glutamate + ADP + phosphate + H(+)</text>
        <dbReference type="Rhea" id="RHEA:17521"/>
        <dbReference type="Rhea" id="RHEA-COMP:9681"/>
        <dbReference type="Rhea" id="RHEA-COMP:9684"/>
        <dbReference type="ChEBI" id="CHEBI:15377"/>
        <dbReference type="ChEBI" id="CHEBI:15378"/>
        <dbReference type="ChEBI" id="CHEBI:29985"/>
        <dbReference type="ChEBI" id="CHEBI:30616"/>
        <dbReference type="ChEBI" id="CHEBI:43474"/>
        <dbReference type="ChEBI" id="CHEBI:58359"/>
        <dbReference type="ChEBI" id="CHEBI:78520"/>
        <dbReference type="ChEBI" id="CHEBI:78521"/>
        <dbReference type="ChEBI" id="CHEBI:456216"/>
    </reaction>
</comment>
<comment type="catalytic activity">
    <reaction evidence="1">
        <text>L-aspartyl-tRNA(Asn) + L-glutamine + ATP + H2O = L-asparaginyl-tRNA(Asn) + L-glutamate + ADP + phosphate + 2 H(+)</text>
        <dbReference type="Rhea" id="RHEA:14513"/>
        <dbReference type="Rhea" id="RHEA-COMP:9674"/>
        <dbReference type="Rhea" id="RHEA-COMP:9677"/>
        <dbReference type="ChEBI" id="CHEBI:15377"/>
        <dbReference type="ChEBI" id="CHEBI:15378"/>
        <dbReference type="ChEBI" id="CHEBI:29985"/>
        <dbReference type="ChEBI" id="CHEBI:30616"/>
        <dbReference type="ChEBI" id="CHEBI:43474"/>
        <dbReference type="ChEBI" id="CHEBI:58359"/>
        <dbReference type="ChEBI" id="CHEBI:78515"/>
        <dbReference type="ChEBI" id="CHEBI:78516"/>
        <dbReference type="ChEBI" id="CHEBI:456216"/>
    </reaction>
</comment>
<comment type="subunit">
    <text evidence="1">Heterotrimer of A, B and C subunits.</text>
</comment>
<comment type="similarity">
    <text evidence="1">Belongs to the GatC family.</text>
</comment>
<protein>
    <recommendedName>
        <fullName evidence="1">Aspartyl/glutamyl-tRNA(Asn/Gln) amidotransferase subunit C</fullName>
        <shortName evidence="1">Asp/Glu-ADT subunit C</shortName>
        <ecNumber evidence="1">6.3.5.-</ecNumber>
    </recommendedName>
</protein>
<feature type="chain" id="PRO_0000105319" description="Aspartyl/glutamyl-tRNA(Asn/Gln) amidotransferase subunit C">
    <location>
        <begin position="1"/>
        <end position="97"/>
    </location>
</feature>
<proteinExistence type="inferred from homology"/>
<evidence type="ECO:0000255" key="1">
    <source>
        <dbReference type="HAMAP-Rule" id="MF_00122"/>
    </source>
</evidence>
<gene>
    <name evidence="1" type="primary">gatC</name>
    <name type="ordered locus">PMT_1815</name>
</gene>
<name>GATC_PROMM</name>